<geneLocation type="plasmid">
    <name>pL2</name>
</geneLocation>
<geneLocation type="plasmid">
    <name>pLGV440</name>
</geneLocation>
<protein>
    <recommendedName>
        <fullName>Virulence plasmid protein pGP3-D</fullName>
    </recommendedName>
    <alternativeName>
        <fullName>Proteins P-6/P-7</fullName>
    </alternativeName>
</protein>
<proteinExistence type="evidence at protein level"/>
<sequence>MGNSGFYLYNTQNCVFADNIKVGQMTEPLKDQQIILGTTSTPVAAKMTASDGISLTVSNNPSTNASITIGLDAEKAYQLILEKLGDQILGGIADTIVDSTVQDILDKITTDPSLGLLKAFNNFPITNKIQCNGLFTPRNIETLLGGTEIGKFTVTPKSSGSMFLVSADIIASRMEGGVVLALVREGDSKPYAISYGYSSGVPNLCSLRTRIINTGLTPTTYSLRVGGLESGVVWVNALSNGNDILGITNTSNVSFLEVIPQTNA</sequence>
<evidence type="ECO:0000269" key="1">
    <source ref="3"/>
</evidence>
<dbReference type="EMBL" id="X07547">
    <property type="protein sequence ID" value="CAA30423.1"/>
    <property type="molecule type" value="Genomic_DNA"/>
</dbReference>
<dbReference type="EMBL" id="AM886278">
    <property type="protein sequence ID" value="CAP09059.1"/>
    <property type="molecule type" value="Genomic_DNA"/>
</dbReference>
<dbReference type="PIR" id="S01922">
    <property type="entry name" value="S01922"/>
</dbReference>
<dbReference type="RefSeq" id="YP_001654090.1">
    <property type="nucleotide sequence ID" value="NC_010286.1"/>
</dbReference>
<dbReference type="SMR" id="B0BCM1"/>
<dbReference type="Gene3D" id="2.60.120.1340">
    <property type="match status" value="1"/>
</dbReference>
<dbReference type="Gene3D" id="6.10.250.3190">
    <property type="match status" value="1"/>
</dbReference>
<dbReference type="Gene3D" id="6.20.30.20">
    <property type="match status" value="1"/>
</dbReference>
<dbReference type="InterPro" id="IPR008444">
    <property type="entry name" value="Chlamydia_pGP3"/>
</dbReference>
<dbReference type="InterPro" id="IPR049000">
    <property type="entry name" value="PGP3-D_N"/>
</dbReference>
<dbReference type="InterPro" id="IPR033758">
    <property type="entry name" value="pGP3_C"/>
</dbReference>
<dbReference type="Pfam" id="PF05475">
    <property type="entry name" value="Chlam_vir"/>
    <property type="match status" value="1"/>
</dbReference>
<dbReference type="Pfam" id="PF20857">
    <property type="entry name" value="Pgp3_helical"/>
    <property type="match status" value="1"/>
</dbReference>
<dbReference type="Pfam" id="PF20858">
    <property type="entry name" value="Pgp3_N"/>
    <property type="match status" value="1"/>
</dbReference>
<dbReference type="PIRSF" id="PIRSF016070">
    <property type="entry name" value="Chlamydia_vir"/>
    <property type="match status" value="1"/>
</dbReference>
<organism>
    <name type="scientific">Chlamydia trachomatis serovar L2 (strain ATCC VR-902B / DSM 19102 / 434/Bu)</name>
    <dbReference type="NCBI Taxonomy" id="471472"/>
    <lineage>
        <taxon>Bacteria</taxon>
        <taxon>Pseudomonadati</taxon>
        <taxon>Chlamydiota</taxon>
        <taxon>Chlamydiia</taxon>
        <taxon>Chlamydiales</taxon>
        <taxon>Chlamydiaceae</taxon>
        <taxon>Chlamydia/Chlamydophila group</taxon>
        <taxon>Chlamydia</taxon>
    </lineage>
</organism>
<name>GP3D_CHLT2</name>
<gene>
    <name type="ordered locus">pL2-05</name>
</gene>
<feature type="initiator methionine" description="Removed" evidence="1">
    <location>
        <position position="1"/>
    </location>
</feature>
<feature type="chain" id="PRO_0000391800" description="Virulence plasmid protein pGP3-D">
    <location>
        <begin position="2"/>
        <end position="264"/>
    </location>
</feature>
<comment type="miscellaneous">
    <text>PGP3-D is required for growth within mammalian cells.</text>
</comment>
<accession>B0BCM1</accession>
<accession>P08783</accession>
<accession>P08784</accession>
<accession>P10557</accession>
<accession>Q46431</accession>
<keyword id="KW-0903">Direct protein sequencing</keyword>
<keyword id="KW-0614">Plasmid</keyword>
<reference key="1">
    <citation type="journal article" date="1988" name="Mol. Microbiol.">
        <title>The structure of a plasmid of Chlamydia trachomatis believed to be required for growth within mammalian cells.</title>
        <authorList>
            <person name="Comanducci M."/>
            <person name="Ricci S."/>
            <person name="Ratti G."/>
        </authorList>
    </citation>
    <scope>NUCLEOTIDE SEQUENCE [GENOMIC DNA]</scope>
    <source>
        <plasmid>pLGV440</plasmid>
    </source>
</reference>
<reference key="2">
    <citation type="journal article" date="2008" name="Genome Res.">
        <title>Chlamydia trachomatis: genome sequence analysis of lymphogranuloma venereum isolates.</title>
        <authorList>
            <person name="Thomson N.R."/>
            <person name="Holden M.T.G."/>
            <person name="Carder C."/>
            <person name="Lennard N."/>
            <person name="Lockey S.J."/>
            <person name="Marsh P."/>
            <person name="Skipp P."/>
            <person name="O'Connor C.D."/>
            <person name="Goodhead I."/>
            <person name="Norbertzcak H."/>
            <person name="Harris B."/>
            <person name="Ormond D."/>
            <person name="Rance R."/>
            <person name="Quail M.A."/>
            <person name="Parkhill J."/>
            <person name="Stephens R.S."/>
            <person name="Clarke I.N."/>
        </authorList>
    </citation>
    <scope>NUCLEOTIDE SEQUENCE [LARGE SCALE GENOMIC DNA]</scope>
    <source>
        <strain>ATCC VR-902B / DSM 19102 / 434/Bu</strain>
        <plasmid>pL2</plasmid>
    </source>
</reference>
<reference key="3">
    <citation type="submission" date="1994-09" db="UniProtKB">
        <authorList>
            <person name="Bini L."/>
            <person name="Santucci A."/>
            <person name="Magi B."/>
            <person name="Marzocchi B."/>
            <person name="Sanchez-Campillo M."/>
            <person name="Comanducci M."/>
            <person name="Christianen G."/>
            <person name="Birkelund S."/>
            <person name="Vtretou E."/>
            <person name="Ratti G."/>
            <person name="Pallini V."/>
        </authorList>
    </citation>
    <scope>PROTEIN SEQUENCE OF 2-11</scope>
</reference>